<proteinExistence type="evidence at transcript level"/>
<protein>
    <recommendedName>
        <fullName>Isthmin-2</fullName>
    </recommendedName>
</protein>
<accession>Q58T08</accession>
<accession>Q1JQ38</accession>
<name>ISM2_DANRE</name>
<organism>
    <name type="scientific">Danio rerio</name>
    <name type="common">Zebrafish</name>
    <name type="synonym">Brachydanio rerio</name>
    <dbReference type="NCBI Taxonomy" id="7955"/>
    <lineage>
        <taxon>Eukaryota</taxon>
        <taxon>Metazoa</taxon>
        <taxon>Chordata</taxon>
        <taxon>Craniata</taxon>
        <taxon>Vertebrata</taxon>
        <taxon>Euteleostomi</taxon>
        <taxon>Actinopterygii</taxon>
        <taxon>Neopterygii</taxon>
        <taxon>Teleostei</taxon>
        <taxon>Ostariophysi</taxon>
        <taxon>Cypriniformes</taxon>
        <taxon>Danionidae</taxon>
        <taxon>Danioninae</taxon>
        <taxon>Danio</taxon>
    </lineage>
</organism>
<evidence type="ECO:0000255" key="1"/>
<evidence type="ECO:0000255" key="2">
    <source>
        <dbReference type="PROSITE-ProRule" id="PRU00210"/>
    </source>
</evidence>
<evidence type="ECO:0000255" key="3">
    <source>
        <dbReference type="PROSITE-ProRule" id="PRU00347"/>
    </source>
</evidence>
<evidence type="ECO:0000256" key="4">
    <source>
        <dbReference type="SAM" id="MobiDB-lite"/>
    </source>
</evidence>
<evidence type="ECO:0000305" key="5"/>
<dbReference type="EMBL" id="AY856372">
    <property type="protein sequence ID" value="AAX52520.1"/>
    <property type="molecule type" value="mRNA"/>
</dbReference>
<dbReference type="EMBL" id="BC116497">
    <property type="protein sequence ID" value="AAI16498.1"/>
    <property type="status" value="ALT_SEQ"/>
    <property type="molecule type" value="mRNA"/>
</dbReference>
<dbReference type="RefSeq" id="NP_001018345.1">
    <property type="nucleotide sequence ID" value="NM_001020509.1"/>
</dbReference>
<dbReference type="SMR" id="Q58T08"/>
<dbReference type="FunCoup" id="Q58T08">
    <property type="interactions" value="1"/>
</dbReference>
<dbReference type="STRING" id="7955.ENSDARP00000070453"/>
<dbReference type="GlyCosmos" id="Q58T08">
    <property type="glycosylation" value="3 sites, No reported glycans"/>
</dbReference>
<dbReference type="PaxDb" id="7955-ENSDARP00000070453"/>
<dbReference type="GeneID" id="553163"/>
<dbReference type="KEGG" id="dre:553163"/>
<dbReference type="AGR" id="ZFIN:ZDB-GENE-050523-4"/>
<dbReference type="CTD" id="553163"/>
<dbReference type="ZFIN" id="ZDB-GENE-050523-4">
    <property type="gene designation" value="ism2b"/>
</dbReference>
<dbReference type="eggNOG" id="ENOG502RU1R">
    <property type="taxonomic scope" value="Eukaryota"/>
</dbReference>
<dbReference type="InParanoid" id="Q58T08"/>
<dbReference type="OrthoDB" id="9930623at2759"/>
<dbReference type="PhylomeDB" id="Q58T08"/>
<dbReference type="PRO" id="PR:Q58T08"/>
<dbReference type="Proteomes" id="UP000000437">
    <property type="component" value="Chromosome 20"/>
</dbReference>
<dbReference type="GO" id="GO:0005576">
    <property type="term" value="C:extracellular region"/>
    <property type="evidence" value="ECO:0007669"/>
    <property type="project" value="UniProtKB-SubCell"/>
</dbReference>
<dbReference type="Gene3D" id="2.20.100.10">
    <property type="entry name" value="Thrombospondin type-1 (TSP1) repeat"/>
    <property type="match status" value="1"/>
</dbReference>
<dbReference type="InterPro" id="IPR005533">
    <property type="entry name" value="AMOP_dom"/>
</dbReference>
<dbReference type="InterPro" id="IPR051867">
    <property type="entry name" value="Angio_Inhib/Adhesion_GPCR"/>
</dbReference>
<dbReference type="InterPro" id="IPR000884">
    <property type="entry name" value="TSP1_rpt"/>
</dbReference>
<dbReference type="InterPro" id="IPR036383">
    <property type="entry name" value="TSP1_rpt_sf"/>
</dbReference>
<dbReference type="PANTHER" id="PTHR10239">
    <property type="entry name" value="ISTHMIN-2"/>
    <property type="match status" value="1"/>
</dbReference>
<dbReference type="PANTHER" id="PTHR10239:SF31">
    <property type="entry name" value="ISTHMIN-2"/>
    <property type="match status" value="1"/>
</dbReference>
<dbReference type="Pfam" id="PF03782">
    <property type="entry name" value="AMOP"/>
    <property type="match status" value="1"/>
</dbReference>
<dbReference type="Pfam" id="PF00090">
    <property type="entry name" value="TSP_1"/>
    <property type="match status" value="1"/>
</dbReference>
<dbReference type="SMART" id="SM00723">
    <property type="entry name" value="AMOP"/>
    <property type="match status" value="1"/>
</dbReference>
<dbReference type="SMART" id="SM00209">
    <property type="entry name" value="TSP1"/>
    <property type="match status" value="1"/>
</dbReference>
<dbReference type="SUPFAM" id="SSF82895">
    <property type="entry name" value="TSP-1 type 1 repeat"/>
    <property type="match status" value="1"/>
</dbReference>
<dbReference type="PROSITE" id="PS50856">
    <property type="entry name" value="AMOP"/>
    <property type="match status" value="1"/>
</dbReference>
<dbReference type="PROSITE" id="PS50092">
    <property type="entry name" value="TSP1"/>
    <property type="match status" value="1"/>
</dbReference>
<keyword id="KW-1015">Disulfide bond</keyword>
<keyword id="KW-0325">Glycoprotein</keyword>
<keyword id="KW-1185">Reference proteome</keyword>
<keyword id="KW-0964">Secreted</keyword>
<keyword id="KW-0732">Signal</keyword>
<feature type="signal peptide" evidence="1">
    <location>
        <begin position="1"/>
        <end position="25"/>
    </location>
</feature>
<feature type="chain" id="PRO_0000348259" description="Isthmin-2">
    <location>
        <begin position="26"/>
        <end position="437"/>
    </location>
</feature>
<feature type="domain" description="TSP type-1" evidence="2">
    <location>
        <begin position="197"/>
        <end position="242"/>
    </location>
</feature>
<feature type="domain" description="AMOP" evidence="3">
    <location>
        <begin position="262"/>
        <end position="425"/>
    </location>
</feature>
<feature type="region of interest" description="Disordered" evidence="4">
    <location>
        <begin position="156"/>
        <end position="191"/>
    </location>
</feature>
<feature type="compositionally biased region" description="Acidic residues" evidence="4">
    <location>
        <begin position="165"/>
        <end position="176"/>
    </location>
</feature>
<feature type="glycosylation site" description="N-linked (GlcNAc...) asparagine" evidence="1">
    <location>
        <position position="217"/>
    </location>
</feature>
<feature type="glycosylation site" description="N-linked (GlcNAc...) asparagine" evidence="1">
    <location>
        <position position="258"/>
    </location>
</feature>
<feature type="glycosylation site" description="N-linked (GlcNAc...) asparagine" evidence="1">
    <location>
        <position position="349"/>
    </location>
</feature>
<feature type="disulfide bond" evidence="2">
    <location>
        <begin position="209"/>
        <end position="236"/>
    </location>
</feature>
<feature type="disulfide bond" evidence="2">
    <location>
        <begin position="213"/>
        <end position="241"/>
    </location>
</feature>
<feature type="disulfide bond" evidence="2">
    <location>
        <begin position="224"/>
        <end position="228"/>
    </location>
</feature>
<sequence length="437" mass="49717">MLRARKGLWVLLSVLLAFWIERAISFPVRHHKRSRNGVYVENQVQNHLADSHPHQRRWLQHHSTGVLPLPEPEEESKPFVLDFKNLPDLANADIGSQNPNIQVTIEVLDDPPMDVEMDLVKEWSNDWSTSSPSSTVEWLGGKKLFWPLFWGYTDADSGEDGTGQAEDEEDDYDYDSGEPIPSGLGKTDGDWTHNRYEEKEEEWSTWSPCSVTCGHGNQTRSRSCGDFCTSTESQSCDLVPCPDDWNSVGHVFPFEMENGTEPYGTDVGSCEKWLNCKSEFLQRYLQQVFTELPNCPCSYPSHVSNNIVSLLDVGHERSFQWRDASGPKERLDIYKPSARSCLRSGLSKNGTTLAAQHCCYDDNKQLITRGKGAGTPNLISTEFSPELHFKVDVLPWILCKGDWSRFHAVRPPNNGLHCMENPQQDIFMNELEEAREY</sequence>
<gene>
    <name type="primary">ism2</name>
</gene>
<reference key="1">
    <citation type="submission" date="2004-12" db="EMBL/GenBank/DDBJ databases">
        <title>Isthmin-1 is regulated by Fgf and TGF beta signalling and contributes to early patterning of the zebrafish embryo.</title>
        <authorList>
            <person name="Raible F."/>
            <person name="Araki I."/>
            <person name="Brand M."/>
        </authorList>
    </citation>
    <scope>NUCLEOTIDE SEQUENCE [MRNA]</scope>
</reference>
<reference key="2">
    <citation type="submission" date="2006-05" db="EMBL/GenBank/DDBJ databases">
        <authorList>
            <consortium name="NIH - Zebrafish Gene Collection (ZGC) project"/>
        </authorList>
    </citation>
    <scope>NUCLEOTIDE SEQUENCE [LARGE SCALE MRNA] OF 1-197</scope>
    <source>
        <tissue>Larva</tissue>
    </source>
</reference>
<comment type="subcellular location">
    <subcellularLocation>
        <location evidence="5">Secreted</location>
    </subcellularLocation>
</comment>
<comment type="similarity">
    <text evidence="5">Belongs to the isthmin family.</text>
</comment>
<comment type="sequence caution" evidence="5">
    <conflict type="miscellaneous discrepancy">
        <sequence resource="EMBL-CDS" id="AAI16498"/>
    </conflict>
    <text>Potential poly-A sequence.</text>
</comment>